<reference key="1">
    <citation type="journal article" date="2011" name="J. Bacteriol.">
        <title>Comparative genomics of 28 Salmonella enterica isolates: evidence for CRISPR-mediated adaptive sublineage evolution.</title>
        <authorList>
            <person name="Fricke W.F."/>
            <person name="Mammel M.K."/>
            <person name="McDermott P.F."/>
            <person name="Tartera C."/>
            <person name="White D.G."/>
            <person name="Leclerc J.E."/>
            <person name="Ravel J."/>
            <person name="Cebula T.A."/>
        </authorList>
    </citation>
    <scope>NUCLEOTIDE SEQUENCE [LARGE SCALE GENOMIC DNA]</scope>
    <source>
        <strain>SL254</strain>
    </source>
</reference>
<name>GCS2_SALNS</name>
<accession>B4SXT5</accession>
<organism>
    <name type="scientific">Salmonella newport (strain SL254)</name>
    <dbReference type="NCBI Taxonomy" id="423368"/>
    <lineage>
        <taxon>Bacteria</taxon>
        <taxon>Pseudomonadati</taxon>
        <taxon>Pseudomonadota</taxon>
        <taxon>Gammaproteobacteria</taxon>
        <taxon>Enterobacterales</taxon>
        <taxon>Enterobacteriaceae</taxon>
        <taxon>Salmonella</taxon>
    </lineage>
</organism>
<feature type="chain" id="PRO_1000148232" description="Putative glutamate--cysteine ligase 2">
    <location>
        <begin position="1"/>
        <end position="372"/>
    </location>
</feature>
<dbReference type="EC" id="6.3.2.2" evidence="1"/>
<dbReference type="EMBL" id="CP001113">
    <property type="protein sequence ID" value="ACF61847.1"/>
    <property type="molecule type" value="Genomic_DNA"/>
</dbReference>
<dbReference type="RefSeq" id="WP_001196909.1">
    <property type="nucleotide sequence ID" value="NZ_CCMR01000003.1"/>
</dbReference>
<dbReference type="SMR" id="B4SXT5"/>
<dbReference type="KEGG" id="see:SNSL254_A0636"/>
<dbReference type="HOGENOM" id="CLU_044848_1_1_6"/>
<dbReference type="Proteomes" id="UP000008824">
    <property type="component" value="Chromosome"/>
</dbReference>
<dbReference type="GO" id="GO:0005524">
    <property type="term" value="F:ATP binding"/>
    <property type="evidence" value="ECO:0007669"/>
    <property type="project" value="UniProtKB-KW"/>
</dbReference>
<dbReference type="GO" id="GO:0004357">
    <property type="term" value="F:glutamate-cysteine ligase activity"/>
    <property type="evidence" value="ECO:0007669"/>
    <property type="project" value="UniProtKB-EC"/>
</dbReference>
<dbReference type="GO" id="GO:0042398">
    <property type="term" value="P:modified amino acid biosynthetic process"/>
    <property type="evidence" value="ECO:0007669"/>
    <property type="project" value="InterPro"/>
</dbReference>
<dbReference type="FunFam" id="3.30.590.20:FF:000002">
    <property type="entry name" value="Putative glutamate--cysteine ligase 2"/>
    <property type="match status" value="1"/>
</dbReference>
<dbReference type="Gene3D" id="3.30.590.20">
    <property type="match status" value="1"/>
</dbReference>
<dbReference type="HAMAP" id="MF_01609">
    <property type="entry name" value="Glu_cys_ligase_2"/>
    <property type="match status" value="1"/>
</dbReference>
<dbReference type="InterPro" id="IPR050141">
    <property type="entry name" value="GCL_type2/YbdK_subfam"/>
</dbReference>
<dbReference type="InterPro" id="IPR006336">
    <property type="entry name" value="GCS2"/>
</dbReference>
<dbReference type="InterPro" id="IPR014746">
    <property type="entry name" value="Gln_synth/guanido_kin_cat_dom"/>
</dbReference>
<dbReference type="InterPro" id="IPR011793">
    <property type="entry name" value="YbdK"/>
</dbReference>
<dbReference type="NCBIfam" id="TIGR02050">
    <property type="entry name" value="gshA_cyan_rel"/>
    <property type="match status" value="1"/>
</dbReference>
<dbReference type="NCBIfam" id="NF010040">
    <property type="entry name" value="PRK13516.1"/>
    <property type="match status" value="1"/>
</dbReference>
<dbReference type="PANTHER" id="PTHR36510">
    <property type="entry name" value="GLUTAMATE--CYSTEINE LIGASE 2-RELATED"/>
    <property type="match status" value="1"/>
</dbReference>
<dbReference type="PANTHER" id="PTHR36510:SF1">
    <property type="entry name" value="GLUTAMATE--CYSTEINE LIGASE 2-RELATED"/>
    <property type="match status" value="1"/>
</dbReference>
<dbReference type="Pfam" id="PF04107">
    <property type="entry name" value="GCS2"/>
    <property type="match status" value="1"/>
</dbReference>
<dbReference type="SUPFAM" id="SSF55931">
    <property type="entry name" value="Glutamine synthetase/guanido kinase"/>
    <property type="match status" value="1"/>
</dbReference>
<gene>
    <name type="primary">ybdK</name>
    <name type="ordered locus">SNSL254_A0636</name>
</gene>
<protein>
    <recommendedName>
        <fullName evidence="1">Putative glutamate--cysteine ligase 2</fullName>
        <ecNumber evidence="1">6.3.2.2</ecNumber>
    </recommendedName>
    <alternativeName>
        <fullName evidence="1">Gamma-glutamylcysteine synthetase 2</fullName>
        <shortName evidence="1">GCS 2</shortName>
        <shortName evidence="1">Gamma-GCS 2</shortName>
    </alternativeName>
</protein>
<evidence type="ECO:0000255" key="1">
    <source>
        <dbReference type="HAMAP-Rule" id="MF_01609"/>
    </source>
</evidence>
<proteinExistence type="inferred from homology"/>
<comment type="function">
    <text evidence="1">ATP-dependent carboxylate-amine ligase which exhibits weak glutamate--cysteine ligase activity.</text>
</comment>
<comment type="catalytic activity">
    <reaction evidence="1">
        <text>L-cysteine + L-glutamate + ATP = gamma-L-glutamyl-L-cysteine + ADP + phosphate + H(+)</text>
        <dbReference type="Rhea" id="RHEA:13285"/>
        <dbReference type="ChEBI" id="CHEBI:15378"/>
        <dbReference type="ChEBI" id="CHEBI:29985"/>
        <dbReference type="ChEBI" id="CHEBI:30616"/>
        <dbReference type="ChEBI" id="CHEBI:35235"/>
        <dbReference type="ChEBI" id="CHEBI:43474"/>
        <dbReference type="ChEBI" id="CHEBI:58173"/>
        <dbReference type="ChEBI" id="CHEBI:456216"/>
        <dbReference type="EC" id="6.3.2.2"/>
    </reaction>
</comment>
<comment type="subunit">
    <text evidence="1">Homodimer.</text>
</comment>
<comment type="similarity">
    <text evidence="1">Belongs to the glutamate--cysteine ligase type 2 family. YbdK subfamily.</text>
</comment>
<sequence>MALNDFHVSEPYTLGIELEMQVINPPGYDLSQDSSTLIDAVKPQLTAGEIKHDITESMLEMATGVCRDIDQAAAQLSAMQHVILQAASEHHLGICGGGTHPFQKWQRQEVCDNERYQRTLENFGYLIQQATVFGQHVHVGCANGDDAIYLLHGLSHFVPHFIALSAASPYMQGSDTRFACARLNIFSAFPDNGPMPWVSNWQEFAGLFRRLSYTTMIDSIKDLHWDIRPSPAFGTVEVRVMDTPLTLDHAINMAGLIQATAHWLLTERPFKPQEQDYLLYKFNRFQACRYGLEGVLTDVYTGDRRRLADDTLRLLDNVTPSARKLGADSAIDALRLQVKKGGNEAQYMREFIADGGSLIGLIQKHCEIWAGQ</sequence>
<keyword id="KW-0067">ATP-binding</keyword>
<keyword id="KW-0436">Ligase</keyword>
<keyword id="KW-0547">Nucleotide-binding</keyword>